<feature type="chain" id="PRO_0000084402" description="Alpha-(1-6)-linked fucose-specific lectin">
    <location>
        <begin position="1"/>
        <end position="28" status="greater than"/>
    </location>
</feature>
<feature type="non-terminal residue">
    <location>
        <position position="28"/>
    </location>
</feature>
<protein>
    <recommendedName>
        <fullName>Alpha-(1-6)-linked fucose-specific lectin</fullName>
    </recommendedName>
    <alternativeName>
        <fullName>RSL</fullName>
    </alternativeName>
</protein>
<name>LECF_RHIST</name>
<keyword id="KW-0903">Direct protein sequencing</keyword>
<keyword id="KW-0430">Lectin</keyword>
<keyword id="KW-0964">Secreted</keyword>
<reference key="1">
    <citation type="journal article" date="2003" name="J. Biol. Chem.">
        <title>A new fungal lectin recognizing alpha(1-6)-linked fucose in the N-glycan.</title>
        <authorList>
            <person name="Oda Y."/>
            <person name="Senaha T."/>
            <person name="Matsuno Y."/>
            <person name="Nakajima K."/>
            <person name="Naka R."/>
            <person name="Kinoshita M."/>
            <person name="Honda E."/>
            <person name="Furuta I."/>
            <person name="Kakehi K."/>
        </authorList>
    </citation>
    <scope>PROTEIN SEQUENCE</scope>
    <scope>FUNCTION</scope>
    <scope>SUBUNIT</scope>
    <scope>SUBCELLULAR LOCATION</scope>
    <scope>TISSUE SPECIFICITY</scope>
    <scope>MASS SPECTROMETRY</scope>
</reference>
<dbReference type="SMR" id="P83973"/>
<dbReference type="GO" id="GO:0005576">
    <property type="term" value="C:extracellular region"/>
    <property type="evidence" value="ECO:0007669"/>
    <property type="project" value="UniProtKB-SubCell"/>
</dbReference>
<dbReference type="GO" id="GO:0030246">
    <property type="term" value="F:carbohydrate binding"/>
    <property type="evidence" value="ECO:0007669"/>
    <property type="project" value="UniProtKB-KW"/>
</dbReference>
<comment type="function">
    <text evidence="1">Alpha-(1-6)-linked L-fucose specific lectin.</text>
</comment>
<comment type="biophysicochemical properties">
    <temperatureDependence>
        <text>Thermostable. Still fully active after heating to 70 degrees Celsius for 10 minutes.</text>
    </temperatureDependence>
</comment>
<comment type="subunit">
    <text evidence="1">Homohexamer.</text>
</comment>
<comment type="subcellular location">
    <subcellularLocation>
        <location evidence="1">Secreted</location>
    </subcellularLocation>
</comment>
<comment type="tissue specificity">
    <text evidence="1">Expressed by mycelium-forming spores.</text>
</comment>
<comment type="mass spectrometry" mass="4570.0" method="MALDI" evidence="1"/>
<comment type="miscellaneous">
    <text>Metal ions are not required for the saccharide-binding activity.</text>
</comment>
<accession>P83973</accession>
<sequence length="28" mass="3087">IDPVNVKKLQCDGDTYKCTADLDFGDGR</sequence>
<proteinExistence type="evidence at protein level"/>
<organism>
    <name type="scientific">Rhizopus stolonifer</name>
    <name type="common">Rhizopus nigricans</name>
    <dbReference type="NCBI Taxonomy" id="4846"/>
    <lineage>
        <taxon>Eukaryota</taxon>
        <taxon>Fungi</taxon>
        <taxon>Fungi incertae sedis</taxon>
        <taxon>Mucoromycota</taxon>
        <taxon>Mucoromycotina</taxon>
        <taxon>Mucoromycetes</taxon>
        <taxon>Mucorales</taxon>
        <taxon>Mucorineae</taxon>
        <taxon>Rhizopodaceae</taxon>
        <taxon>Rhizopus</taxon>
    </lineage>
</organism>
<evidence type="ECO:0000269" key="1">
    <source>
    </source>
</evidence>